<evidence type="ECO:0000255" key="1">
    <source>
        <dbReference type="HAMAP-Rule" id="MF_01257"/>
    </source>
</evidence>
<keyword id="KW-0460">Magnesium</keyword>
<keyword id="KW-1185">Reference proteome</keyword>
<keyword id="KW-0808">Transferase</keyword>
<dbReference type="EC" id="2.7.8.28" evidence="1"/>
<dbReference type="EMBL" id="AE000516">
    <property type="protein sequence ID" value="AAK47701.1"/>
    <property type="molecule type" value="Genomic_DNA"/>
</dbReference>
<dbReference type="PIR" id="F70977">
    <property type="entry name" value="F70977"/>
</dbReference>
<dbReference type="SMR" id="P9WP80"/>
<dbReference type="KEGG" id="mtc:MT3359"/>
<dbReference type="PATRIC" id="fig|83331.31.peg.3616"/>
<dbReference type="HOGENOM" id="CLU_055795_0_0_11"/>
<dbReference type="UniPathway" id="UPA00071"/>
<dbReference type="Proteomes" id="UP000001020">
    <property type="component" value="Chromosome"/>
</dbReference>
<dbReference type="GO" id="GO:0043743">
    <property type="term" value="F:LPPG:FO 2-phospho-L-lactate transferase activity"/>
    <property type="evidence" value="ECO:0007669"/>
    <property type="project" value="UniProtKB-EC"/>
</dbReference>
<dbReference type="GO" id="GO:0000287">
    <property type="term" value="F:magnesium ion binding"/>
    <property type="evidence" value="ECO:0007669"/>
    <property type="project" value="InterPro"/>
</dbReference>
<dbReference type="GO" id="GO:0052645">
    <property type="term" value="P:F420-0 metabolic process"/>
    <property type="evidence" value="ECO:0007669"/>
    <property type="project" value="UniProtKB-UniRule"/>
</dbReference>
<dbReference type="CDD" id="cd07186">
    <property type="entry name" value="CofD_like"/>
    <property type="match status" value="1"/>
</dbReference>
<dbReference type="FunFam" id="1.10.8.240:FF:000001">
    <property type="entry name" value="2-phospho-L-lactate transferase"/>
    <property type="match status" value="1"/>
</dbReference>
<dbReference type="FunFam" id="3.40.50.10680:FF:000001">
    <property type="entry name" value="2-phospho-L-lactate transferase"/>
    <property type="match status" value="1"/>
</dbReference>
<dbReference type="Gene3D" id="1.10.8.240">
    <property type="entry name" value="CofD-like domain"/>
    <property type="match status" value="1"/>
</dbReference>
<dbReference type="Gene3D" id="3.40.50.10680">
    <property type="entry name" value="CofD-like domains"/>
    <property type="match status" value="1"/>
</dbReference>
<dbReference type="HAMAP" id="MF_01257">
    <property type="entry name" value="CofD"/>
    <property type="match status" value="1"/>
</dbReference>
<dbReference type="InterPro" id="IPR002882">
    <property type="entry name" value="CofD"/>
</dbReference>
<dbReference type="InterPro" id="IPR038136">
    <property type="entry name" value="CofD-like_dom_sf"/>
</dbReference>
<dbReference type="InterPro" id="IPR010115">
    <property type="entry name" value="FbiA/CofD"/>
</dbReference>
<dbReference type="NCBIfam" id="TIGR01819">
    <property type="entry name" value="F420_cofD"/>
    <property type="match status" value="1"/>
</dbReference>
<dbReference type="PANTHER" id="PTHR43007">
    <property type="entry name" value="2-PHOSPHO-L-LACTATE TRANSFERASE"/>
    <property type="match status" value="1"/>
</dbReference>
<dbReference type="PANTHER" id="PTHR43007:SF1">
    <property type="entry name" value="2-PHOSPHO-L-LACTATE TRANSFERASE"/>
    <property type="match status" value="1"/>
</dbReference>
<dbReference type="Pfam" id="PF01933">
    <property type="entry name" value="CofD"/>
    <property type="match status" value="1"/>
</dbReference>
<dbReference type="SUPFAM" id="SSF142338">
    <property type="entry name" value="CofD-like"/>
    <property type="match status" value="1"/>
</dbReference>
<proteinExistence type="inferred from homology"/>
<organism>
    <name type="scientific">Mycobacterium tuberculosis (strain CDC 1551 / Oshkosh)</name>
    <dbReference type="NCBI Taxonomy" id="83331"/>
    <lineage>
        <taxon>Bacteria</taxon>
        <taxon>Bacillati</taxon>
        <taxon>Actinomycetota</taxon>
        <taxon>Actinomycetes</taxon>
        <taxon>Mycobacteriales</taxon>
        <taxon>Mycobacteriaceae</taxon>
        <taxon>Mycobacterium</taxon>
        <taxon>Mycobacterium tuberculosis complex</taxon>
    </lineage>
</organism>
<comment type="function">
    <text evidence="1">Catalyzes the transfer of the phosphoenolpyruvate moiety from enoylpyruvoyl-2-diphospho-5'-guanosine (EPPG) to 7,8-didemethyl-8-hydroxy-5-deazariboflavin (FO) with the formation of dehydro coenzyme F420-0 and GMP.</text>
</comment>
<comment type="catalytic activity">
    <reaction evidence="1">
        <text>enolpyruvoyl-2-diphospho-5'-guanosine + 7,8-didemethyl-8-hydroxy-5-deazariboflavin = dehydro coenzyme F420-0 + GMP + H(+)</text>
        <dbReference type="Rhea" id="RHEA:27510"/>
        <dbReference type="ChEBI" id="CHEBI:15378"/>
        <dbReference type="ChEBI" id="CHEBI:58115"/>
        <dbReference type="ChEBI" id="CHEBI:59904"/>
        <dbReference type="ChEBI" id="CHEBI:143701"/>
        <dbReference type="ChEBI" id="CHEBI:143705"/>
        <dbReference type="EC" id="2.7.8.28"/>
    </reaction>
</comment>
<comment type="cofactor">
    <cofactor evidence="1">
        <name>Mg(2+)</name>
        <dbReference type="ChEBI" id="CHEBI:18420"/>
    </cofactor>
</comment>
<comment type="pathway">
    <text evidence="1">Cofactor biosynthesis; coenzyme F420 biosynthesis.</text>
</comment>
<comment type="subunit">
    <text evidence="1">Homodimer.</text>
</comment>
<comment type="similarity">
    <text evidence="1">Belongs to the CofD family.</text>
</comment>
<name>FBIA_MYCTO</name>
<gene>
    <name evidence="1" type="primary">fbiA</name>
    <name type="ordered locus">MT3359</name>
</gene>
<sequence length="331" mass="35335">MKVTVLAGGVGGARFLLGVQQLLGLGQFAANSAHSDADHQLSAVVNVGDDAWIHGLRVCPDLDTCMYTLGGGVDPQRGWGQRDETWHAMQELVRYGVQPDWFELGDRDLATHLVRTQMLQAGYPLSQITEALCDRWQPGARLLPATDDRCETHVVITDPVDESRKAIHFQEWWVRYRAQVPTHSFAFVGAEKSSAATEAIAALADADIIMLAPSNPVVSIGAILAVPGIRAALREATAPIVGYSPIIGEKPLRGMADTCLSVIGVDSTAAAVGRHYGARCATGILDCWLVHDGDHAEIDGVTVRSVPLLMTDPNATAEMVRAGCDLAGVVA</sequence>
<feature type="chain" id="PRO_0000426998" description="Phosphoenolpyruvate transferase">
    <location>
        <begin position="1"/>
        <end position="331"/>
    </location>
</feature>
<feature type="binding site" evidence="1">
    <location>
        <position position="63"/>
    </location>
    <ligand>
        <name>7,8-didemethyl-8-hydroxy-5-deazariboflavin</name>
        <dbReference type="ChEBI" id="CHEBI:59904"/>
    </ligand>
</feature>
<reference key="1">
    <citation type="journal article" date="2002" name="J. Bacteriol.">
        <title>Whole-genome comparison of Mycobacterium tuberculosis clinical and laboratory strains.</title>
        <authorList>
            <person name="Fleischmann R.D."/>
            <person name="Alland D."/>
            <person name="Eisen J.A."/>
            <person name="Carpenter L."/>
            <person name="White O."/>
            <person name="Peterson J.D."/>
            <person name="DeBoy R.T."/>
            <person name="Dodson R.J."/>
            <person name="Gwinn M.L."/>
            <person name="Haft D.H."/>
            <person name="Hickey E.K."/>
            <person name="Kolonay J.F."/>
            <person name="Nelson W.C."/>
            <person name="Umayam L.A."/>
            <person name="Ermolaeva M.D."/>
            <person name="Salzberg S.L."/>
            <person name="Delcher A."/>
            <person name="Utterback T.R."/>
            <person name="Weidman J.F."/>
            <person name="Khouri H.M."/>
            <person name="Gill J."/>
            <person name="Mikula A."/>
            <person name="Bishai W."/>
            <person name="Jacobs W.R. Jr."/>
            <person name="Venter J.C."/>
            <person name="Fraser C.M."/>
        </authorList>
    </citation>
    <scope>NUCLEOTIDE SEQUENCE [LARGE SCALE GENOMIC DNA]</scope>
    <source>
        <strain>CDC 1551 / Oshkosh</strain>
    </source>
</reference>
<protein>
    <recommendedName>
        <fullName evidence="1">Phosphoenolpyruvate transferase</fullName>
        <ecNumber evidence="1">2.7.8.28</ecNumber>
    </recommendedName>
    <alternativeName>
        <fullName evidence="1">EPPG:FO PEP transferase</fullName>
    </alternativeName>
</protein>
<accession>P9WP80</accession>
<accession>L0TET5</accession>
<accession>P96866</accession>
<accession>Q7D5T6</accession>